<accession>B9M384</accession>
<gene>
    <name evidence="1" type="primary">dapL</name>
    <name type="ordered locus">Geob_1134</name>
</gene>
<comment type="function">
    <text evidence="1">Involved in the synthesis of meso-diaminopimelate (m-DAP or DL-DAP), required for both lysine and peptidoglycan biosynthesis. Catalyzes the direct conversion of tetrahydrodipicolinate to LL-diaminopimelate.</text>
</comment>
<comment type="catalytic activity">
    <reaction evidence="1">
        <text>(2S,6S)-2,6-diaminopimelate + 2-oxoglutarate = (S)-2,3,4,5-tetrahydrodipicolinate + L-glutamate + H2O + H(+)</text>
        <dbReference type="Rhea" id="RHEA:23988"/>
        <dbReference type="ChEBI" id="CHEBI:15377"/>
        <dbReference type="ChEBI" id="CHEBI:15378"/>
        <dbReference type="ChEBI" id="CHEBI:16810"/>
        <dbReference type="ChEBI" id="CHEBI:16845"/>
        <dbReference type="ChEBI" id="CHEBI:29985"/>
        <dbReference type="ChEBI" id="CHEBI:57609"/>
        <dbReference type="EC" id="2.6.1.83"/>
    </reaction>
</comment>
<comment type="cofactor">
    <cofactor evidence="1">
        <name>pyridoxal 5'-phosphate</name>
        <dbReference type="ChEBI" id="CHEBI:597326"/>
    </cofactor>
</comment>
<comment type="pathway">
    <text evidence="1">Amino-acid biosynthesis; L-lysine biosynthesis via DAP pathway; LL-2,6-diaminopimelate from (S)-tetrahydrodipicolinate (aminotransferase route): step 1/1.</text>
</comment>
<comment type="subunit">
    <text evidence="1">Homodimer.</text>
</comment>
<comment type="similarity">
    <text evidence="1">Belongs to the class-I pyridoxal-phosphate-dependent aminotransferase family. LL-diaminopimelate aminotransferase subfamily.</text>
</comment>
<sequence length="410" mass="45338">MAKINDNYLKLKAGYLFPEIGRRVRAFAEANPSAKVIRLGIGDVTRPLAPAVLKAFHDAVDDLATTDKFAGYGPEQGYDWLINAIIDKSYKPLGVSLKTEEIFISDGSKCDCANILDIFAMDNVVAIGDPVYPVYNDTNVMIGRTGEADEKGYYKGIVYMPCNEANGFIPELPKEKVDIIYLCFPNNPTGTVASKAELKKWVDYANANDAVIFFDAAYEAFITDPSIPHSIYEIEGAKKCAIEFRSFSKTAGFTGVRCGLVVVPEEVMGTTADGERYSFNRLWLRRTTTKFNGASYPVQRAAAAVYSDEGWKQTKEVIDYYMENARIIREGLKEVGVTVFGGVDAPYIWLKTPGGMTSWDFFDKLLTECNVVGTPGSGFGPSGEGYFRLSAFGHRENVIEAVERIKKNLK</sequence>
<proteinExistence type="inferred from homology"/>
<name>DAPAT_GEODF</name>
<feature type="chain" id="PRO_1000186869" description="LL-diaminopimelate aminotransferase">
    <location>
        <begin position="1"/>
        <end position="410"/>
    </location>
</feature>
<feature type="binding site" evidence="1">
    <location>
        <position position="15"/>
    </location>
    <ligand>
        <name>substrate</name>
    </ligand>
</feature>
<feature type="binding site" evidence="1">
    <location>
        <position position="42"/>
    </location>
    <ligand>
        <name>substrate</name>
    </ligand>
</feature>
<feature type="binding site" evidence="1">
    <location>
        <position position="72"/>
    </location>
    <ligand>
        <name>pyridoxal 5'-phosphate</name>
        <dbReference type="ChEBI" id="CHEBI:597326"/>
    </ligand>
</feature>
<feature type="binding site" evidence="1">
    <location>
        <begin position="108"/>
        <end position="109"/>
    </location>
    <ligand>
        <name>pyridoxal 5'-phosphate</name>
        <dbReference type="ChEBI" id="CHEBI:597326"/>
    </ligand>
</feature>
<feature type="binding site" evidence="1">
    <location>
        <position position="109"/>
    </location>
    <ligand>
        <name>substrate</name>
    </ligand>
</feature>
<feature type="binding site" evidence="1">
    <location>
        <position position="132"/>
    </location>
    <ligand>
        <name>pyridoxal 5'-phosphate</name>
        <dbReference type="ChEBI" id="CHEBI:597326"/>
    </ligand>
</feature>
<feature type="binding site" evidence="1">
    <location>
        <position position="132"/>
    </location>
    <ligand>
        <name>substrate</name>
    </ligand>
</feature>
<feature type="binding site" evidence="1">
    <location>
        <position position="187"/>
    </location>
    <ligand>
        <name>pyridoxal 5'-phosphate</name>
        <dbReference type="ChEBI" id="CHEBI:597326"/>
    </ligand>
</feature>
<feature type="binding site" evidence="1">
    <location>
        <position position="187"/>
    </location>
    <ligand>
        <name>substrate</name>
    </ligand>
</feature>
<feature type="binding site" evidence="1">
    <location>
        <position position="218"/>
    </location>
    <ligand>
        <name>pyridoxal 5'-phosphate</name>
        <dbReference type="ChEBI" id="CHEBI:597326"/>
    </ligand>
</feature>
<feature type="binding site" evidence="1">
    <location>
        <begin position="246"/>
        <end position="248"/>
    </location>
    <ligand>
        <name>pyridoxal 5'-phosphate</name>
        <dbReference type="ChEBI" id="CHEBI:597326"/>
    </ligand>
</feature>
<feature type="binding site" evidence="1">
    <location>
        <position position="257"/>
    </location>
    <ligand>
        <name>pyridoxal 5'-phosphate</name>
        <dbReference type="ChEBI" id="CHEBI:597326"/>
    </ligand>
</feature>
<feature type="binding site" evidence="1">
    <location>
        <position position="292"/>
    </location>
    <ligand>
        <name>pyridoxal 5'-phosphate</name>
        <dbReference type="ChEBI" id="CHEBI:597326"/>
    </ligand>
</feature>
<feature type="binding site" evidence="1">
    <location>
        <position position="292"/>
    </location>
    <ligand>
        <name>substrate</name>
    </ligand>
</feature>
<feature type="binding site" evidence="1">
    <location>
        <position position="388"/>
    </location>
    <ligand>
        <name>substrate</name>
    </ligand>
</feature>
<feature type="modified residue" description="N6-(pyridoxal phosphate)lysine" evidence="1">
    <location>
        <position position="249"/>
    </location>
</feature>
<protein>
    <recommendedName>
        <fullName evidence="1">LL-diaminopimelate aminotransferase</fullName>
        <shortName evidence="1">DAP-AT</shortName>
        <shortName evidence="1">DAP-aminotransferase</shortName>
        <shortName evidence="1">LL-DAP-aminotransferase</shortName>
        <ecNumber evidence="1">2.6.1.83</ecNumber>
    </recommendedName>
</protein>
<organism>
    <name type="scientific">Geotalea daltonii (strain DSM 22248 / JCM 15807 / FRC-32)</name>
    <name type="common">Geobacter daltonii</name>
    <dbReference type="NCBI Taxonomy" id="316067"/>
    <lineage>
        <taxon>Bacteria</taxon>
        <taxon>Pseudomonadati</taxon>
        <taxon>Thermodesulfobacteriota</taxon>
        <taxon>Desulfuromonadia</taxon>
        <taxon>Geobacterales</taxon>
        <taxon>Geobacteraceae</taxon>
        <taxon>Geotalea</taxon>
    </lineage>
</organism>
<evidence type="ECO:0000255" key="1">
    <source>
        <dbReference type="HAMAP-Rule" id="MF_01642"/>
    </source>
</evidence>
<reference key="1">
    <citation type="submission" date="2009-01" db="EMBL/GenBank/DDBJ databases">
        <title>Complete sequence of Geobacter sp. FRC-32.</title>
        <authorList>
            <consortium name="US DOE Joint Genome Institute"/>
            <person name="Lucas S."/>
            <person name="Copeland A."/>
            <person name="Lapidus A."/>
            <person name="Glavina del Rio T."/>
            <person name="Dalin E."/>
            <person name="Tice H."/>
            <person name="Bruce D."/>
            <person name="Goodwin L."/>
            <person name="Pitluck S."/>
            <person name="Saunders E."/>
            <person name="Brettin T."/>
            <person name="Detter J.C."/>
            <person name="Han C."/>
            <person name="Larimer F."/>
            <person name="Land M."/>
            <person name="Hauser L."/>
            <person name="Kyrpides N."/>
            <person name="Ovchinnikova G."/>
            <person name="Kostka J."/>
            <person name="Richardson P."/>
        </authorList>
    </citation>
    <scope>NUCLEOTIDE SEQUENCE [LARGE SCALE GENOMIC DNA]</scope>
    <source>
        <strain>DSM 22248 / JCM 15807 / FRC-32</strain>
    </source>
</reference>
<keyword id="KW-0032">Aminotransferase</keyword>
<keyword id="KW-0663">Pyridoxal phosphate</keyword>
<keyword id="KW-1185">Reference proteome</keyword>
<keyword id="KW-0808">Transferase</keyword>
<dbReference type="EC" id="2.6.1.83" evidence="1"/>
<dbReference type="EMBL" id="CP001390">
    <property type="protein sequence ID" value="ACM19494.1"/>
    <property type="molecule type" value="Genomic_DNA"/>
</dbReference>
<dbReference type="RefSeq" id="WP_012646223.1">
    <property type="nucleotide sequence ID" value="NC_011979.1"/>
</dbReference>
<dbReference type="SMR" id="B9M384"/>
<dbReference type="STRING" id="316067.Geob_1134"/>
<dbReference type="KEGG" id="geo:Geob_1134"/>
<dbReference type="eggNOG" id="COG0436">
    <property type="taxonomic scope" value="Bacteria"/>
</dbReference>
<dbReference type="HOGENOM" id="CLU_051433_0_0_7"/>
<dbReference type="OrthoDB" id="9804474at2"/>
<dbReference type="UniPathway" id="UPA00034">
    <property type="reaction ID" value="UER00466"/>
</dbReference>
<dbReference type="Proteomes" id="UP000007721">
    <property type="component" value="Chromosome"/>
</dbReference>
<dbReference type="GO" id="GO:0010285">
    <property type="term" value="F:L,L-diaminopimelate aminotransferase activity"/>
    <property type="evidence" value="ECO:0007669"/>
    <property type="project" value="UniProtKB-EC"/>
</dbReference>
<dbReference type="GO" id="GO:0030170">
    <property type="term" value="F:pyridoxal phosphate binding"/>
    <property type="evidence" value="ECO:0007669"/>
    <property type="project" value="InterPro"/>
</dbReference>
<dbReference type="GO" id="GO:0009089">
    <property type="term" value="P:lysine biosynthetic process via diaminopimelate"/>
    <property type="evidence" value="ECO:0007669"/>
    <property type="project" value="UniProtKB-UniPathway"/>
</dbReference>
<dbReference type="CDD" id="cd00609">
    <property type="entry name" value="AAT_like"/>
    <property type="match status" value="1"/>
</dbReference>
<dbReference type="FunFam" id="3.40.640.10:FF:000099">
    <property type="entry name" value="LL-diaminopimelate aminotransferase, chloroplastic"/>
    <property type="match status" value="1"/>
</dbReference>
<dbReference type="Gene3D" id="3.90.1150.10">
    <property type="entry name" value="Aspartate Aminotransferase, domain 1"/>
    <property type="match status" value="1"/>
</dbReference>
<dbReference type="Gene3D" id="3.40.640.10">
    <property type="entry name" value="Type I PLP-dependent aspartate aminotransferase-like (Major domain)"/>
    <property type="match status" value="1"/>
</dbReference>
<dbReference type="HAMAP" id="MF_01642">
    <property type="entry name" value="DapL_aminotrans_1"/>
    <property type="match status" value="1"/>
</dbReference>
<dbReference type="InterPro" id="IPR004839">
    <property type="entry name" value="Aminotransferase_I/II_large"/>
</dbReference>
<dbReference type="InterPro" id="IPR019942">
    <property type="entry name" value="DapL/ALD1"/>
</dbReference>
<dbReference type="InterPro" id="IPR015424">
    <property type="entry name" value="PyrdxlP-dep_Trfase"/>
</dbReference>
<dbReference type="InterPro" id="IPR015421">
    <property type="entry name" value="PyrdxlP-dep_Trfase_major"/>
</dbReference>
<dbReference type="InterPro" id="IPR015422">
    <property type="entry name" value="PyrdxlP-dep_Trfase_small"/>
</dbReference>
<dbReference type="NCBIfam" id="TIGR03542">
    <property type="entry name" value="DAPAT_plant"/>
    <property type="match status" value="1"/>
</dbReference>
<dbReference type="PANTHER" id="PTHR43144">
    <property type="entry name" value="AMINOTRANSFERASE"/>
    <property type="match status" value="1"/>
</dbReference>
<dbReference type="Pfam" id="PF00155">
    <property type="entry name" value="Aminotran_1_2"/>
    <property type="match status" value="1"/>
</dbReference>
<dbReference type="SUPFAM" id="SSF53383">
    <property type="entry name" value="PLP-dependent transferases"/>
    <property type="match status" value="1"/>
</dbReference>